<name>COX41_PIG</name>
<protein>
    <recommendedName>
        <fullName>Cytochrome c oxidase subunit 4 isoform 1, mitochondrial</fullName>
    </recommendedName>
    <alternativeName>
        <fullName>Cytochrome c oxidase polypeptide IV</fullName>
    </alternativeName>
    <alternativeName>
        <fullName>Cytochrome c oxidase subunit IV isoform 1</fullName>
        <shortName>COX IV-1</shortName>
    </alternativeName>
</protein>
<organism>
    <name type="scientific">Sus scrofa</name>
    <name type="common">Pig</name>
    <dbReference type="NCBI Taxonomy" id="9823"/>
    <lineage>
        <taxon>Eukaryota</taxon>
        <taxon>Metazoa</taxon>
        <taxon>Chordata</taxon>
        <taxon>Craniata</taxon>
        <taxon>Vertebrata</taxon>
        <taxon>Euteleostomi</taxon>
        <taxon>Mammalia</taxon>
        <taxon>Eutheria</taxon>
        <taxon>Laurasiatheria</taxon>
        <taxon>Artiodactyla</taxon>
        <taxon>Suina</taxon>
        <taxon>Suidae</taxon>
        <taxon>Sus</taxon>
    </lineage>
</organism>
<feature type="transit peptide" description="Mitochondrion" evidence="1">
    <location>
        <begin position="1"/>
        <end position="22"/>
    </location>
</feature>
<feature type="chain" id="PRO_0000006086" description="Cytochrome c oxidase subunit 4 isoform 1, mitochondrial">
    <location>
        <begin position="23"/>
        <end position="97" status="greater than"/>
    </location>
</feature>
<feature type="modified residue" description="N6-acetyllysine; alternate" evidence="5">
    <location>
        <position position="29"/>
    </location>
</feature>
<feature type="modified residue" description="N6-succinyllysine; alternate" evidence="5">
    <location>
        <position position="29"/>
    </location>
</feature>
<feature type="modified residue" description="N6-acetyllysine" evidence="4">
    <location>
        <position position="53"/>
    </location>
</feature>
<feature type="modified residue" description="Phosphoserine" evidence="3">
    <location>
        <position position="56"/>
    </location>
</feature>
<feature type="modified residue" description="Phosphoserine" evidence="3">
    <location>
        <position position="58"/>
    </location>
</feature>
<feature type="modified residue" description="N6-acetyllysine; alternate" evidence="4">
    <location>
        <position position="60"/>
    </location>
</feature>
<feature type="modified residue" description="N6-succinyllysine; alternate" evidence="5">
    <location>
        <position position="60"/>
    </location>
</feature>
<feature type="modified residue" description="N6-acetyllysine" evidence="5">
    <location>
        <position position="67"/>
    </location>
</feature>
<feature type="non-terminal residue">
    <location>
        <position position="97"/>
    </location>
</feature>
<keyword id="KW-0007">Acetylation</keyword>
<keyword id="KW-0472">Membrane</keyword>
<keyword id="KW-0496">Mitochondrion</keyword>
<keyword id="KW-0999">Mitochondrion inner membrane</keyword>
<keyword id="KW-0597">Phosphoprotein</keyword>
<keyword id="KW-1185">Reference proteome</keyword>
<keyword id="KW-0809">Transit peptide</keyword>
<accession>Q95283</accession>
<dbReference type="EMBL" id="Z81228">
    <property type="protein sequence ID" value="CAB03573.1"/>
    <property type="molecule type" value="mRNA"/>
</dbReference>
<dbReference type="FunCoup" id="Q95283">
    <property type="interactions" value="19"/>
</dbReference>
<dbReference type="PaxDb" id="9823-ENSSSCP00000022554"/>
<dbReference type="PeptideAtlas" id="Q95283"/>
<dbReference type="eggNOG" id="KOG4075">
    <property type="taxonomic scope" value="Eukaryota"/>
</dbReference>
<dbReference type="InParanoid" id="Q95283"/>
<dbReference type="UniPathway" id="UPA00705"/>
<dbReference type="Proteomes" id="UP000008227">
    <property type="component" value="Unplaced"/>
</dbReference>
<dbReference type="Proteomes" id="UP000314985">
    <property type="component" value="Unplaced"/>
</dbReference>
<dbReference type="Proteomes" id="UP000694570">
    <property type="component" value="Unplaced"/>
</dbReference>
<dbReference type="Proteomes" id="UP000694571">
    <property type="component" value="Unplaced"/>
</dbReference>
<dbReference type="Proteomes" id="UP000694720">
    <property type="component" value="Unplaced"/>
</dbReference>
<dbReference type="Proteomes" id="UP000694722">
    <property type="component" value="Unplaced"/>
</dbReference>
<dbReference type="Proteomes" id="UP000694723">
    <property type="component" value="Unplaced"/>
</dbReference>
<dbReference type="Proteomes" id="UP000694724">
    <property type="component" value="Unplaced"/>
</dbReference>
<dbReference type="Proteomes" id="UP000694725">
    <property type="component" value="Unplaced"/>
</dbReference>
<dbReference type="Proteomes" id="UP000694726">
    <property type="component" value="Unplaced"/>
</dbReference>
<dbReference type="Proteomes" id="UP000694727">
    <property type="component" value="Unplaced"/>
</dbReference>
<dbReference type="Proteomes" id="UP000694728">
    <property type="component" value="Unplaced"/>
</dbReference>
<dbReference type="GO" id="GO:0005743">
    <property type="term" value="C:mitochondrial inner membrane"/>
    <property type="evidence" value="ECO:0000250"/>
    <property type="project" value="UniProtKB"/>
</dbReference>
<dbReference type="GO" id="GO:0045277">
    <property type="term" value="C:respiratory chain complex IV"/>
    <property type="evidence" value="ECO:0000318"/>
    <property type="project" value="GO_Central"/>
</dbReference>
<dbReference type="GO" id="GO:0006123">
    <property type="term" value="P:mitochondrial electron transport, cytochrome c to oxygen"/>
    <property type="evidence" value="ECO:0000318"/>
    <property type="project" value="GO_Central"/>
</dbReference>
<dbReference type="Gene3D" id="1.10.442.10">
    <property type="entry name" value="Cytochrome c oxidase subunit IV"/>
    <property type="match status" value="1"/>
</dbReference>
<dbReference type="InterPro" id="IPR013288">
    <property type="entry name" value="Cyt_c_oxidase_su4"/>
</dbReference>
<dbReference type="InterPro" id="IPR004203">
    <property type="entry name" value="Cyt_c_oxidase_su4_fam"/>
</dbReference>
<dbReference type="InterPro" id="IPR036639">
    <property type="entry name" value="Cyt_c_oxidase_su4_sf"/>
</dbReference>
<dbReference type="PANTHER" id="PTHR10707:SF12">
    <property type="entry name" value="CYTOCHROME C OXIDASE SUBUNIT 4 ISOFORM 1, MITOCHONDRIAL"/>
    <property type="match status" value="1"/>
</dbReference>
<dbReference type="PANTHER" id="PTHR10707">
    <property type="entry name" value="CYTOCHROME C OXIDASE SUBUNIT IV"/>
    <property type="match status" value="1"/>
</dbReference>
<dbReference type="Pfam" id="PF02936">
    <property type="entry name" value="COX4"/>
    <property type="match status" value="1"/>
</dbReference>
<dbReference type="PRINTS" id="PR01873">
    <property type="entry name" value="CYTCOXIDASE4"/>
</dbReference>
<dbReference type="SUPFAM" id="SSF81406">
    <property type="entry name" value="Mitochondrial cytochrome c oxidase subunit IV"/>
    <property type="match status" value="1"/>
</dbReference>
<evidence type="ECO:0000250" key="1">
    <source>
        <dbReference type="UniProtKB" id="P00423"/>
    </source>
</evidence>
<evidence type="ECO:0000250" key="2">
    <source>
        <dbReference type="UniProtKB" id="P00424"/>
    </source>
</evidence>
<evidence type="ECO:0000250" key="3">
    <source>
        <dbReference type="UniProtKB" id="P10888"/>
    </source>
</evidence>
<evidence type="ECO:0000250" key="4">
    <source>
        <dbReference type="UniProtKB" id="P13073"/>
    </source>
</evidence>
<evidence type="ECO:0000250" key="5">
    <source>
        <dbReference type="UniProtKB" id="P19783"/>
    </source>
</evidence>
<evidence type="ECO:0000305" key="6"/>
<gene>
    <name type="primary">COX4I1</name>
    <name type="synonym">COX4</name>
</gene>
<sequence>MLATRVFNLIGRRAISTSVCVRAHGSXVKSEDYALPVYVDRRDYPLPDVAHVKNLSASQKAXKEKEKASWSSLSMDEKVELYRLKFNESFAEMNRST</sequence>
<comment type="function">
    <text evidence="2">Component of the cytochrome c oxidase, the last enzyme in the mitochondrial electron transport chain which drives oxidative phosphorylation. The respiratory chain contains 3 multisubunit complexes succinate dehydrogenase (complex II, CII), ubiquinol-cytochrome c oxidoreductase (cytochrome b-c1 complex, complex III, CIII) and cytochrome c oxidase (complex IV, CIV), that cooperate to transfer electrons derived from NADH and succinate to molecular oxygen, creating an electrochemical gradient over the inner membrane that drives transmembrane transport and the ATP synthase. Cytochrome c oxidase is the component of the respiratory chain that catalyzes the reduction of oxygen to water. Electrons originating from reduced cytochrome c in the intermembrane space (IMS) are transferred via the dinuclear copper A center (CU(A)) of subunit 2 and heme A of subunit 1 to the active site in subunit 1, a binuclear center (BNC) formed by heme A3 and copper B (CU(B)). The BNC reduces molecular oxygen to 2 water molecules using 4 electrons from cytochrome c in the IMS and 4 protons from the mitochondrial matrix.</text>
</comment>
<comment type="pathway">
    <text evidence="2">Energy metabolism; oxidative phosphorylation.</text>
</comment>
<comment type="subunit">
    <text evidence="1 3 4 5">Component of the cytochrome c oxidase (complex IV, CIV), a multisubunit enzyme composed of 14 subunits. The complex is composed of a catalytic core of 3 subunits MT-CO1, MT-CO2 and MT-CO3, encoded in the mitochondrial DNA, and 11 supernumerary subunits COX4I, COX5A, COX5B, COX6A, COX6B, COX6C, COX7A, COX7B, COX7C, COX8 and NDUFA4, which are encoded in the nuclear genome. The complex exists as a monomer or a dimer and forms supercomplexes (SCs) in the inner mitochondrial membrane with NADH-ubiquinone oxidoreductase (complex I, CI) and ubiquinol-cytochrome c oxidoreductase (cytochrome b-c1 complex, complex III, CIII), resulting in different assemblies (supercomplex SCI(1)III(2)IV(1) and megacomplex MCI(2)III(2)IV(2)) (By similarity). Interacts with PHB2; the interaction decreases in absence of SPHK2 (By similarity). Interacts with AFG1L (By similarity). Interacts with ABCB7; this interaction allows the regulation of cellular iron homeostasis and cellular reactive oxygen species (ROS) levels in cardiomyocytes (By similarity). Interacts with FLVCR2; this interaction occurs in the absence of heme and is disrupted upon heme binding. Interacts with IRGC (By similarity).</text>
</comment>
<comment type="subcellular location">
    <subcellularLocation>
        <location evidence="1">Mitochondrion inner membrane</location>
        <topology evidence="1">Single-pass membrane protein</topology>
    </subcellularLocation>
</comment>
<comment type="similarity">
    <text evidence="6">Belongs to the cytochrome c oxidase IV family.</text>
</comment>
<reference key="1">
    <citation type="submission" date="1996-10" db="EMBL/GenBank/DDBJ databases">
        <title>Evaluation and characterization of a porcine small intestine cDNA library.</title>
        <authorList>
            <person name="Winteroe A.K."/>
            <person name="Fredholm M."/>
            <person name="Davies W."/>
        </authorList>
    </citation>
    <scope>NUCLEOTIDE SEQUENCE [LARGE SCALE MRNA]</scope>
    <source>
        <tissue>Small intestine</tissue>
    </source>
</reference>
<proteinExistence type="evidence at transcript level"/>